<protein>
    <recommendedName>
        <fullName>Harpin HrpZ</fullName>
    </recommendedName>
    <alternativeName>
        <fullName>Harpin-Psg</fullName>
    </alternativeName>
    <alternativeName>
        <fullName>HrpZ-Psg protein</fullName>
    </alternativeName>
</protein>
<proteinExistence type="evidence at protein level"/>
<feature type="chain" id="PRO_0000220303" description="Harpin HrpZ">
    <location>
        <begin position="1"/>
        <end position="345"/>
    </location>
</feature>
<feature type="repeat" description="1-1">
    <location>
        <begin position="213"/>
        <end position="219"/>
    </location>
</feature>
<feature type="repeat" description="1-2">
    <location>
        <begin position="269"/>
        <end position="275"/>
    </location>
</feature>
<feature type="region of interest" description="Disordered" evidence="2">
    <location>
        <begin position="202"/>
        <end position="247"/>
    </location>
</feature>
<feature type="region of interest" description="2 X 7 AA repeats of G-G-G-L-G-[ST]-P">
    <location>
        <begin position="213"/>
        <end position="275"/>
    </location>
</feature>
<feature type="compositionally biased region" description="Gly residues" evidence="2">
    <location>
        <begin position="206"/>
        <end position="217"/>
    </location>
</feature>
<feature type="compositionally biased region" description="Polar residues" evidence="2">
    <location>
        <begin position="219"/>
        <end position="228"/>
    </location>
</feature>
<reference key="1">
    <citation type="journal article" date="1995" name="Mol. Plant Microbe Interact.">
        <title>The HrpZ proteins of Pseudomonas syringae pvs. syringae, glycinea, and tomato are encoded by an operon containing Yersinia ysc homologs and elicit the hypersensitive response in tomato but not soybean.</title>
        <authorList>
            <person name="Preston G."/>
            <person name="Huang H.-C."/>
            <person name="He S.Y."/>
            <person name="Collmer A."/>
        </authorList>
    </citation>
    <scope>NUCLEOTIDE SEQUENCE [GENOMIC DNA]</scope>
    <scope>FUNCTION IN HR</scope>
    <source>
        <strain>Race 4</strain>
    </source>
</reference>
<accession>Q52481</accession>
<organism>
    <name type="scientific">Pseudomonas savastanoi pv. glycinea</name>
    <name type="common">Pseudomonas syringae pv. glycinea</name>
    <dbReference type="NCBI Taxonomy" id="318"/>
    <lineage>
        <taxon>Bacteria</taxon>
        <taxon>Pseudomonadati</taxon>
        <taxon>Pseudomonadota</taxon>
        <taxon>Gammaproteobacteria</taxon>
        <taxon>Pseudomonadales</taxon>
        <taxon>Pseudomonadaceae</taxon>
        <taxon>Pseudomonas</taxon>
    </lineage>
</organism>
<evidence type="ECO:0000250" key="1"/>
<evidence type="ECO:0000256" key="2">
    <source>
        <dbReference type="SAM" id="MobiDB-lite"/>
    </source>
</evidence>
<evidence type="ECO:0000269" key="3">
    <source>
    </source>
</evidence>
<evidence type="ECO:0000305" key="4"/>
<name>HRPZ_PSESG</name>
<sequence length="345" mass="35290">MQSLSLNSSTLQSPSMALVLIRPETETTGPSTSSRALQEVIAQLAQELTHNGQLDESSPLGKLLGKAMAASGKAGGGLEDIKAALDTLIHEKLGDNFGASADNASDTGQHDLMTQVLNGLAKSMLNDLLTKQDDGTRFSEDDMPMLKKIAEFMDDNPAQFPKPDSGSWVNELKEDNFLDGDETAQFRSALDIIGQQLGSQQNAAGGLAGDSSGGGLGSPVSNTENSPGSLGDPLIDANTGPASNSNSNGDVGQLIGELIDRGLQSVLAGGGLGTPVSTANTALVPGGEQPNQDLGQLLGGLLQKGLEATLQDAGQTGTGVQSSTAQVALLLVNMLLQSTKNQAAA</sequence>
<comment type="function">
    <text evidence="1 3">Harpins are proteins able to elicit hypersensitive response (HR) in non-host plants and are required for pathogenicity in host plants. HrpZ forms ion-conducting pores permeable for cations. Such pore-forming activity may allow nutrient release and/or delivery of virulence factors during bacterial colonization of host plants (By similarity).</text>
</comment>
<comment type="subunit">
    <text evidence="1">Homomultimeric.</text>
</comment>
<comment type="subcellular location">
    <subcellularLocation>
        <location evidence="1">Secreted</location>
    </subcellularLocation>
    <subcellularLocation>
        <location evidence="1">Host cell membrane</location>
    </subcellularLocation>
    <text evidence="1">Secreted via type III secretion system (T3SS), delivered into the host intercellular space. HrpZ travels through the hrp pilus and it is secreted only from the pilus tip (By similarity).</text>
</comment>
<comment type="domain">
    <text>The glycine-rich region is characteristic of harpins.</text>
</comment>
<comment type="similarity">
    <text evidence="4">Belongs to the harpin HrpZ family.</text>
</comment>
<gene>
    <name type="primary">hrpZ</name>
</gene>
<keyword id="KW-1032">Host cell membrane</keyword>
<keyword id="KW-1043">Host membrane</keyword>
<keyword id="KW-0928">Hypersensitive response elicitation</keyword>
<keyword id="KW-0407">Ion channel</keyword>
<keyword id="KW-0406">Ion transport</keyword>
<keyword id="KW-0472">Membrane</keyword>
<keyword id="KW-0677">Repeat</keyword>
<keyword id="KW-0964">Secreted</keyword>
<keyword id="KW-0813">Transport</keyword>
<keyword id="KW-0843">Virulence</keyword>
<dbReference type="EMBL" id="L41862">
    <property type="protein sequence ID" value="AAB00136.1"/>
    <property type="molecule type" value="Genomic_DNA"/>
</dbReference>
<dbReference type="RefSeq" id="WP_004656200.1">
    <property type="nucleotide sequence ID" value="NZ_RBVH01000303.1"/>
</dbReference>
<dbReference type="GO" id="GO:0005576">
    <property type="term" value="C:extracellular region"/>
    <property type="evidence" value="ECO:0007669"/>
    <property type="project" value="UniProtKB-SubCell"/>
</dbReference>
<dbReference type="GO" id="GO:0020002">
    <property type="term" value="C:host cell plasma membrane"/>
    <property type="evidence" value="ECO:0007669"/>
    <property type="project" value="UniProtKB-SubCell"/>
</dbReference>
<dbReference type="GO" id="GO:0016020">
    <property type="term" value="C:membrane"/>
    <property type="evidence" value="ECO:0007669"/>
    <property type="project" value="UniProtKB-KW"/>
</dbReference>
<dbReference type="GO" id="GO:0034220">
    <property type="term" value="P:monoatomic ion transmembrane transport"/>
    <property type="evidence" value="ECO:0007669"/>
    <property type="project" value="UniProtKB-KW"/>
</dbReference>
<dbReference type="GO" id="GO:0052040">
    <property type="term" value="P:symbiont-mediated perturbation of host programmed cell death"/>
    <property type="evidence" value="ECO:0007669"/>
    <property type="project" value="UniProtKB-KW"/>
</dbReference>
<dbReference type="InterPro" id="IPR006961">
    <property type="entry name" value="HrpN/Z"/>
</dbReference>
<dbReference type="InterPro" id="IPR054634">
    <property type="entry name" value="T3SS_HrpZ"/>
</dbReference>
<dbReference type="NCBIfam" id="NF045569">
    <property type="entry name" value="T3SSHrpZ"/>
    <property type="match status" value="1"/>
</dbReference>
<dbReference type="Pfam" id="PF04877">
    <property type="entry name" value="Harpin"/>
    <property type="match status" value="1"/>
</dbReference>